<evidence type="ECO:0000255" key="1">
    <source>
        <dbReference type="HAMAP-Rule" id="MF_01860"/>
    </source>
</evidence>
<gene>
    <name type="ordered locus">GWCH70_0753</name>
</gene>
<reference key="1">
    <citation type="submission" date="2009-06" db="EMBL/GenBank/DDBJ databases">
        <title>Complete sequence of chromosome of Geopacillus sp. WCH70.</title>
        <authorList>
            <consortium name="US DOE Joint Genome Institute"/>
            <person name="Lucas S."/>
            <person name="Copeland A."/>
            <person name="Lapidus A."/>
            <person name="Glavina del Rio T."/>
            <person name="Dalin E."/>
            <person name="Tice H."/>
            <person name="Bruce D."/>
            <person name="Goodwin L."/>
            <person name="Pitluck S."/>
            <person name="Chertkov O."/>
            <person name="Brettin T."/>
            <person name="Detter J.C."/>
            <person name="Han C."/>
            <person name="Larimer F."/>
            <person name="Land M."/>
            <person name="Hauser L."/>
            <person name="Kyrpides N."/>
            <person name="Mikhailova N."/>
            <person name="Brumm P."/>
            <person name="Mead D.A."/>
            <person name="Richardson P."/>
        </authorList>
    </citation>
    <scope>NUCLEOTIDE SEQUENCE [LARGE SCALE GENOMIC DNA]</scope>
    <source>
        <strain>WCH70</strain>
    </source>
</reference>
<feature type="chain" id="PRO_1000216156" description="UPF0736 protein GWCH70_0753">
    <location>
        <begin position="1"/>
        <end position="246"/>
    </location>
</feature>
<proteinExistence type="inferred from homology"/>
<organism>
    <name type="scientific">Geobacillus sp. (strain WCH70)</name>
    <dbReference type="NCBI Taxonomy" id="471223"/>
    <lineage>
        <taxon>Bacteria</taxon>
        <taxon>Bacillati</taxon>
        <taxon>Bacillota</taxon>
        <taxon>Bacilli</taxon>
        <taxon>Bacillales</taxon>
        <taxon>Anoxybacillaceae</taxon>
        <taxon>Geobacillus</taxon>
    </lineage>
</organism>
<name>Y753_GEOSW</name>
<dbReference type="EMBL" id="CP001638">
    <property type="protein sequence ID" value="ACS23639.1"/>
    <property type="molecule type" value="Genomic_DNA"/>
</dbReference>
<dbReference type="SMR" id="C5D781"/>
<dbReference type="STRING" id="471223.GWCH70_0753"/>
<dbReference type="KEGG" id="gwc:GWCH70_0753"/>
<dbReference type="eggNOG" id="ENOG502Z8PJ">
    <property type="taxonomic scope" value="Bacteria"/>
</dbReference>
<dbReference type="HOGENOM" id="CLU_1101152_0_0_9"/>
<dbReference type="OrthoDB" id="2960746at2"/>
<dbReference type="HAMAP" id="MF_01860">
    <property type="entry name" value="UPF0736"/>
    <property type="match status" value="1"/>
</dbReference>
<dbReference type="InterPro" id="IPR020909">
    <property type="entry name" value="UPF0736"/>
</dbReference>
<dbReference type="Pfam" id="PF12227">
    <property type="entry name" value="DUF3603"/>
    <property type="match status" value="1"/>
</dbReference>
<protein>
    <recommendedName>
        <fullName evidence="1">UPF0736 protein GWCH70_0753</fullName>
    </recommendedName>
</protein>
<sequence>MLYLHDVWVNWFEGEENGYNVCHFHEWRKDDQVELLDQVPLLKVSSALFNYIENSLSEIPKQLLEDVYQKAYVRKNHERIQLDYCFVITDGYGILAVDTIGYNIPIRKSRLIPRQEQLVYEMVAEHQEEPYPLPAHEKEYHILSPSPEWMMGLTRKERQLKQLLFMALDQLHLTKNVAEVRYWYTEWAPQKYPDIQKMSFEEAWQHLYEETKYGWSDKHEQLCEKLIKGQPFFEKLWEMEQEPKVN</sequence>
<comment type="similarity">
    <text evidence="1">Belongs to the UPF0736 family.</text>
</comment>
<accession>C5D781</accession>